<dbReference type="EMBL" id="AF011544">
    <property type="protein sequence ID" value="AAB72187.1"/>
    <property type="status" value="ALT_FRAME"/>
    <property type="molecule type" value="Genomic_DNA"/>
</dbReference>
<dbReference type="EMBL" id="AL009126">
    <property type="protein sequence ID" value="CAB12475.2"/>
    <property type="molecule type" value="Genomic_DNA"/>
</dbReference>
<dbReference type="PIR" id="D69792">
    <property type="entry name" value="D69792"/>
</dbReference>
<dbReference type="RefSeq" id="NP_388537.2">
    <property type="nucleotide sequence ID" value="NC_000964.3"/>
</dbReference>
<dbReference type="RefSeq" id="WP_003242474.1">
    <property type="nucleotide sequence ID" value="NZ_OZ025638.1"/>
</dbReference>
<dbReference type="RefSeq" id="WP_009969292.1">
    <property type="nucleotide sequence ID" value="NZ_CM000487.1"/>
</dbReference>
<dbReference type="SMR" id="O34560"/>
<dbReference type="FunCoup" id="O34560">
    <property type="interactions" value="60"/>
</dbReference>
<dbReference type="STRING" id="224308.BSU06550"/>
<dbReference type="PaxDb" id="224308-BSU06550"/>
<dbReference type="EnsemblBacteria" id="CAB12475">
    <property type="protein sequence ID" value="CAB12475"/>
    <property type="gene ID" value="BSU_06550"/>
</dbReference>
<dbReference type="GeneID" id="936051"/>
<dbReference type="KEGG" id="bsu:BSU06550"/>
<dbReference type="PATRIC" id="fig|224308.179.peg.711"/>
<dbReference type="eggNOG" id="COG0531">
    <property type="taxonomic scope" value="Bacteria"/>
</dbReference>
<dbReference type="InParanoid" id="O34560"/>
<dbReference type="OrthoDB" id="178667at2"/>
<dbReference type="PhylomeDB" id="O34560"/>
<dbReference type="BioCyc" id="BSUB:BSU06550-MONOMER"/>
<dbReference type="Proteomes" id="UP000001570">
    <property type="component" value="Chromosome"/>
</dbReference>
<dbReference type="GO" id="GO:0005886">
    <property type="term" value="C:plasma membrane"/>
    <property type="evidence" value="ECO:0007669"/>
    <property type="project" value="UniProtKB-SubCell"/>
</dbReference>
<dbReference type="GO" id="GO:0022857">
    <property type="term" value="F:transmembrane transporter activity"/>
    <property type="evidence" value="ECO:0007669"/>
    <property type="project" value="InterPro"/>
</dbReference>
<dbReference type="GO" id="GO:0006865">
    <property type="term" value="P:amino acid transport"/>
    <property type="evidence" value="ECO:0007669"/>
    <property type="project" value="UniProtKB-KW"/>
</dbReference>
<dbReference type="Gene3D" id="1.20.1740.10">
    <property type="entry name" value="Amino acid/polyamine transporter I"/>
    <property type="match status" value="1"/>
</dbReference>
<dbReference type="InterPro" id="IPR002293">
    <property type="entry name" value="AA/rel_permease1"/>
</dbReference>
<dbReference type="InterPro" id="IPR050367">
    <property type="entry name" value="APC_superfamily"/>
</dbReference>
<dbReference type="PANTHER" id="PTHR42770">
    <property type="entry name" value="AMINO ACID TRANSPORTER-RELATED"/>
    <property type="match status" value="1"/>
</dbReference>
<dbReference type="PANTHER" id="PTHR42770:SF13">
    <property type="entry name" value="L-METHIONINE_BRANCHED-CHAIN AMINO ACID EXPORTER YJEH"/>
    <property type="match status" value="1"/>
</dbReference>
<dbReference type="Pfam" id="PF13520">
    <property type="entry name" value="AA_permease_2"/>
    <property type="match status" value="1"/>
</dbReference>
<dbReference type="PIRSF" id="PIRSF006060">
    <property type="entry name" value="AA_transporter"/>
    <property type="match status" value="1"/>
</dbReference>
<protein>
    <recommendedName>
        <fullName>Uncharacterized amino acid permease YecA</fullName>
    </recommendedName>
</protein>
<accession>O34560</accession>
<accession>C0SP92</accession>
<accession>Q7BVT8</accession>
<gene>
    <name type="primary">yecA</name>
    <name type="ordered locus">BSU06550</name>
</gene>
<keyword id="KW-0029">Amino-acid transport</keyword>
<keyword id="KW-1003">Cell membrane</keyword>
<keyword id="KW-0472">Membrane</keyword>
<keyword id="KW-1185">Reference proteome</keyword>
<keyword id="KW-0812">Transmembrane</keyword>
<keyword id="KW-1133">Transmembrane helix</keyword>
<keyword id="KW-0813">Transport</keyword>
<evidence type="ECO:0000255" key="1"/>
<evidence type="ECO:0000305" key="2"/>
<sequence>MLPELQRSITWIQGTALTIGAVLGCGILILPSVTADTAGPASLFVWVFMSFLSFFLVGTLARLVKIAPSAGGITAYVQLAFQKKAGAILGWIMLGSVPIGVPIIALTGAHYVSYITEAADWQITLIAGCMLAISILLHMRGIQLSANISTLVICVIVFLLVTSIAVSLPHVTIAEFKPFLPHGWSAAGSVSVMIFFSFVGWEMITPLAEEFHRPEKDVPLSLFLAASCVAGLYIMLSFVTVGTHSYGENGEIASLAMLISKGAGESGVYVTVCLALFITFATIHANIAGFSRMVYALAREGHIPVFFGKLSATKRTPIRVLTAMAAVFGLVLAAHGLFQIDLTTLLKGPSAAFIASYICTMAAALKLLGRRDIGWWMALGAFVACAVIYSFSGWALLYPAVLAAAGYFYMKTKGGHKKKLDHVL</sequence>
<reference key="1">
    <citation type="journal article" date="1996" name="Microbiology">
        <title>The 52 degrees-55 degrees segment of the Bacillus subtilis chromosome: a region devoted to purine uptake and metabolism, and containing the genes cotA, gabP and guaA and the pur gene cluster within a 34960 bp nucleotide sequence.</title>
        <authorList>
            <person name="Borriss R."/>
            <person name="Porwollik S."/>
            <person name="Schroeter R."/>
        </authorList>
    </citation>
    <scope>NUCLEOTIDE SEQUENCE [GENOMIC DNA]</scope>
    <source>
        <strain>168</strain>
    </source>
</reference>
<reference key="2">
    <citation type="journal article" date="1997" name="Nature">
        <title>The complete genome sequence of the Gram-positive bacterium Bacillus subtilis.</title>
        <authorList>
            <person name="Kunst F."/>
            <person name="Ogasawara N."/>
            <person name="Moszer I."/>
            <person name="Albertini A.M."/>
            <person name="Alloni G."/>
            <person name="Azevedo V."/>
            <person name="Bertero M.G."/>
            <person name="Bessieres P."/>
            <person name="Bolotin A."/>
            <person name="Borchert S."/>
            <person name="Borriss R."/>
            <person name="Boursier L."/>
            <person name="Brans A."/>
            <person name="Braun M."/>
            <person name="Brignell S.C."/>
            <person name="Bron S."/>
            <person name="Brouillet S."/>
            <person name="Bruschi C.V."/>
            <person name="Caldwell B."/>
            <person name="Capuano V."/>
            <person name="Carter N.M."/>
            <person name="Choi S.-K."/>
            <person name="Codani J.-J."/>
            <person name="Connerton I.F."/>
            <person name="Cummings N.J."/>
            <person name="Daniel R.A."/>
            <person name="Denizot F."/>
            <person name="Devine K.M."/>
            <person name="Duesterhoeft A."/>
            <person name="Ehrlich S.D."/>
            <person name="Emmerson P.T."/>
            <person name="Entian K.-D."/>
            <person name="Errington J."/>
            <person name="Fabret C."/>
            <person name="Ferrari E."/>
            <person name="Foulger D."/>
            <person name="Fritz C."/>
            <person name="Fujita M."/>
            <person name="Fujita Y."/>
            <person name="Fuma S."/>
            <person name="Galizzi A."/>
            <person name="Galleron N."/>
            <person name="Ghim S.-Y."/>
            <person name="Glaser P."/>
            <person name="Goffeau A."/>
            <person name="Golightly E.J."/>
            <person name="Grandi G."/>
            <person name="Guiseppi G."/>
            <person name="Guy B.J."/>
            <person name="Haga K."/>
            <person name="Haiech J."/>
            <person name="Harwood C.R."/>
            <person name="Henaut A."/>
            <person name="Hilbert H."/>
            <person name="Holsappel S."/>
            <person name="Hosono S."/>
            <person name="Hullo M.-F."/>
            <person name="Itaya M."/>
            <person name="Jones L.-M."/>
            <person name="Joris B."/>
            <person name="Karamata D."/>
            <person name="Kasahara Y."/>
            <person name="Klaerr-Blanchard M."/>
            <person name="Klein C."/>
            <person name="Kobayashi Y."/>
            <person name="Koetter P."/>
            <person name="Koningstein G."/>
            <person name="Krogh S."/>
            <person name="Kumano M."/>
            <person name="Kurita K."/>
            <person name="Lapidus A."/>
            <person name="Lardinois S."/>
            <person name="Lauber J."/>
            <person name="Lazarevic V."/>
            <person name="Lee S.-M."/>
            <person name="Levine A."/>
            <person name="Liu H."/>
            <person name="Masuda S."/>
            <person name="Mauel C."/>
            <person name="Medigue C."/>
            <person name="Medina N."/>
            <person name="Mellado R.P."/>
            <person name="Mizuno M."/>
            <person name="Moestl D."/>
            <person name="Nakai S."/>
            <person name="Noback M."/>
            <person name="Noone D."/>
            <person name="O'Reilly M."/>
            <person name="Ogawa K."/>
            <person name="Ogiwara A."/>
            <person name="Oudega B."/>
            <person name="Park S.-H."/>
            <person name="Parro V."/>
            <person name="Pohl T.M."/>
            <person name="Portetelle D."/>
            <person name="Porwollik S."/>
            <person name="Prescott A.M."/>
            <person name="Presecan E."/>
            <person name="Pujic P."/>
            <person name="Purnelle B."/>
            <person name="Rapoport G."/>
            <person name="Rey M."/>
            <person name="Reynolds S."/>
            <person name="Rieger M."/>
            <person name="Rivolta C."/>
            <person name="Rocha E."/>
            <person name="Roche B."/>
            <person name="Rose M."/>
            <person name="Sadaie Y."/>
            <person name="Sato T."/>
            <person name="Scanlan E."/>
            <person name="Schleich S."/>
            <person name="Schroeter R."/>
            <person name="Scoffone F."/>
            <person name="Sekiguchi J."/>
            <person name="Sekowska A."/>
            <person name="Seror S.J."/>
            <person name="Serror P."/>
            <person name="Shin B.-S."/>
            <person name="Soldo B."/>
            <person name="Sorokin A."/>
            <person name="Tacconi E."/>
            <person name="Takagi T."/>
            <person name="Takahashi H."/>
            <person name="Takemaru K."/>
            <person name="Takeuchi M."/>
            <person name="Tamakoshi A."/>
            <person name="Tanaka T."/>
            <person name="Terpstra P."/>
            <person name="Tognoni A."/>
            <person name="Tosato V."/>
            <person name="Uchiyama S."/>
            <person name="Vandenbol M."/>
            <person name="Vannier F."/>
            <person name="Vassarotti A."/>
            <person name="Viari A."/>
            <person name="Wambutt R."/>
            <person name="Wedler E."/>
            <person name="Wedler H."/>
            <person name="Weitzenegger T."/>
            <person name="Winters P."/>
            <person name="Wipat A."/>
            <person name="Yamamoto H."/>
            <person name="Yamane K."/>
            <person name="Yasumoto K."/>
            <person name="Yata K."/>
            <person name="Yoshida K."/>
            <person name="Yoshikawa H.-F."/>
            <person name="Zumstein E."/>
            <person name="Yoshikawa H."/>
            <person name="Danchin A."/>
        </authorList>
    </citation>
    <scope>NUCLEOTIDE SEQUENCE [LARGE SCALE GENOMIC DNA]</scope>
    <source>
        <strain>168</strain>
    </source>
</reference>
<reference key="3">
    <citation type="journal article" date="2009" name="Microbiology">
        <title>From a consortium sequence to a unified sequence: the Bacillus subtilis 168 reference genome a decade later.</title>
        <authorList>
            <person name="Barbe V."/>
            <person name="Cruveiller S."/>
            <person name="Kunst F."/>
            <person name="Lenoble P."/>
            <person name="Meurice G."/>
            <person name="Sekowska A."/>
            <person name="Vallenet D."/>
            <person name="Wang T."/>
            <person name="Moszer I."/>
            <person name="Medigue C."/>
            <person name="Danchin A."/>
        </authorList>
    </citation>
    <scope>SEQUENCE REVISION TO C-TERMINUS</scope>
</reference>
<proteinExistence type="inferred from homology"/>
<feature type="chain" id="PRO_0000376829" description="Uncharacterized amino acid permease YecA">
    <location>
        <begin position="1"/>
        <end position="424"/>
    </location>
</feature>
<feature type="transmembrane region" description="Helical" evidence="1">
    <location>
        <begin position="9"/>
        <end position="29"/>
    </location>
</feature>
<feature type="transmembrane region" description="Helical" evidence="1">
    <location>
        <begin position="41"/>
        <end position="61"/>
    </location>
</feature>
<feature type="transmembrane region" description="Helical" evidence="1">
    <location>
        <begin position="86"/>
        <end position="106"/>
    </location>
</feature>
<feature type="transmembrane region" description="Helical" evidence="1">
    <location>
        <begin position="119"/>
        <end position="139"/>
    </location>
</feature>
<feature type="transmembrane region" description="Helical" evidence="1">
    <location>
        <begin position="148"/>
        <end position="168"/>
    </location>
</feature>
<feature type="transmembrane region" description="Helical" evidence="1">
    <location>
        <begin position="184"/>
        <end position="204"/>
    </location>
</feature>
<feature type="transmembrane region" description="Helical" evidence="1">
    <location>
        <begin position="222"/>
        <end position="242"/>
    </location>
</feature>
<feature type="transmembrane region" description="Helical" evidence="1">
    <location>
        <begin position="270"/>
        <end position="290"/>
    </location>
</feature>
<feature type="transmembrane region" description="Helical" evidence="1">
    <location>
        <begin position="320"/>
        <end position="340"/>
    </location>
</feature>
<feature type="transmembrane region" description="Helical" evidence="1">
    <location>
        <begin position="345"/>
        <end position="365"/>
    </location>
</feature>
<feature type="transmembrane region" description="Helical" evidence="1">
    <location>
        <begin position="377"/>
        <end position="397"/>
    </location>
</feature>
<name>YECA_BACSU</name>
<organism>
    <name type="scientific">Bacillus subtilis (strain 168)</name>
    <dbReference type="NCBI Taxonomy" id="224308"/>
    <lineage>
        <taxon>Bacteria</taxon>
        <taxon>Bacillati</taxon>
        <taxon>Bacillota</taxon>
        <taxon>Bacilli</taxon>
        <taxon>Bacillales</taxon>
        <taxon>Bacillaceae</taxon>
        <taxon>Bacillus</taxon>
    </lineage>
</organism>
<comment type="subcellular location">
    <subcellularLocation>
        <location evidence="2">Cell membrane</location>
        <topology evidence="2">Multi-pass membrane protein</topology>
    </subcellularLocation>
</comment>
<comment type="similarity">
    <text evidence="2">Belongs to the amino acid-polyamine-organocation (APC) superfamily.</text>
</comment>
<comment type="sequence caution" evidence="2">
    <conflict type="frameshift">
        <sequence resource="EMBL-CDS" id="AAB72187"/>
    </conflict>
</comment>